<comment type="function">
    <text evidence="1">Heme chaperone required for the biogenesis of c-type cytochromes. Transiently binds heme delivered by CcmC and transfers the heme to apo-cytochromes in a process facilitated by CcmF and CcmH.</text>
</comment>
<comment type="subcellular location">
    <subcellularLocation>
        <location evidence="1">Cell inner membrane</location>
        <topology evidence="1">Single-pass type II membrane protein</topology>
        <orientation evidence="1">Periplasmic side</orientation>
    </subcellularLocation>
</comment>
<comment type="similarity">
    <text evidence="1">Belongs to the CcmE/CycJ family.</text>
</comment>
<name>CCME_METPB</name>
<proteinExistence type="inferred from homology"/>
<accession>B1ZE84</accession>
<sequence length="169" mass="17834">MTRKSRRLILIAACGAVLALALGLILSAMSGSIVFFRSPAEVASQGVPPGTRFRLGGLVKDGSVKRGPDQNVEFSVTDTNATVPVQYRGLLPDLFREGQGIVAEGTLDAGGVFRADTVLAKHDENYMPREVADALKAQGRWQEGGGKEAPKDAAKPASADATLGQRSER</sequence>
<gene>
    <name evidence="1" type="primary">ccmE</name>
    <name evidence="1" type="synonym">cycJ</name>
    <name type="ordered locus">Mpop_1402</name>
</gene>
<organism>
    <name type="scientific">Methylorubrum populi (strain ATCC BAA-705 / NCIMB 13946 / BJ001)</name>
    <name type="common">Methylobacterium populi</name>
    <dbReference type="NCBI Taxonomy" id="441620"/>
    <lineage>
        <taxon>Bacteria</taxon>
        <taxon>Pseudomonadati</taxon>
        <taxon>Pseudomonadota</taxon>
        <taxon>Alphaproteobacteria</taxon>
        <taxon>Hyphomicrobiales</taxon>
        <taxon>Methylobacteriaceae</taxon>
        <taxon>Methylorubrum</taxon>
    </lineage>
</organism>
<reference key="1">
    <citation type="submission" date="2008-04" db="EMBL/GenBank/DDBJ databases">
        <title>Complete sequence of chromosome of Methylobacterium populi BJ001.</title>
        <authorList>
            <consortium name="US DOE Joint Genome Institute"/>
            <person name="Copeland A."/>
            <person name="Lucas S."/>
            <person name="Lapidus A."/>
            <person name="Glavina del Rio T."/>
            <person name="Dalin E."/>
            <person name="Tice H."/>
            <person name="Bruce D."/>
            <person name="Goodwin L."/>
            <person name="Pitluck S."/>
            <person name="Chertkov O."/>
            <person name="Brettin T."/>
            <person name="Detter J.C."/>
            <person name="Han C."/>
            <person name="Kuske C.R."/>
            <person name="Schmutz J."/>
            <person name="Larimer F."/>
            <person name="Land M."/>
            <person name="Hauser L."/>
            <person name="Kyrpides N."/>
            <person name="Mikhailova N."/>
            <person name="Marx C."/>
            <person name="Richardson P."/>
        </authorList>
    </citation>
    <scope>NUCLEOTIDE SEQUENCE [LARGE SCALE GENOMIC DNA]</scope>
    <source>
        <strain>ATCC BAA-705 / NCIMB 13946 / BJ001</strain>
    </source>
</reference>
<keyword id="KW-0997">Cell inner membrane</keyword>
<keyword id="KW-1003">Cell membrane</keyword>
<keyword id="KW-0201">Cytochrome c-type biogenesis</keyword>
<keyword id="KW-0349">Heme</keyword>
<keyword id="KW-0408">Iron</keyword>
<keyword id="KW-0472">Membrane</keyword>
<keyword id="KW-0479">Metal-binding</keyword>
<keyword id="KW-0735">Signal-anchor</keyword>
<keyword id="KW-0812">Transmembrane</keyword>
<keyword id="KW-1133">Transmembrane helix</keyword>
<feature type="chain" id="PRO_1000189034" description="Cytochrome c-type biogenesis protein CcmE">
    <location>
        <begin position="1"/>
        <end position="169"/>
    </location>
</feature>
<feature type="topological domain" description="Cytoplasmic" evidence="1">
    <location>
        <begin position="1"/>
        <end position="7"/>
    </location>
</feature>
<feature type="transmembrane region" description="Helical; Signal-anchor for type II membrane protein" evidence="1">
    <location>
        <begin position="8"/>
        <end position="28"/>
    </location>
</feature>
<feature type="topological domain" description="Periplasmic" evidence="1">
    <location>
        <begin position="29"/>
        <end position="169"/>
    </location>
</feature>
<feature type="region of interest" description="Disordered" evidence="2">
    <location>
        <begin position="135"/>
        <end position="169"/>
    </location>
</feature>
<feature type="compositionally biased region" description="Basic and acidic residues" evidence="2">
    <location>
        <begin position="145"/>
        <end position="154"/>
    </location>
</feature>
<feature type="binding site" description="covalent" evidence="1">
    <location>
        <position position="122"/>
    </location>
    <ligand>
        <name>heme</name>
        <dbReference type="ChEBI" id="CHEBI:30413"/>
    </ligand>
</feature>
<feature type="binding site" description="axial binding residue" evidence="1">
    <location>
        <position position="126"/>
    </location>
    <ligand>
        <name>heme</name>
        <dbReference type="ChEBI" id="CHEBI:30413"/>
    </ligand>
    <ligandPart>
        <name>Fe</name>
        <dbReference type="ChEBI" id="CHEBI:18248"/>
    </ligandPart>
</feature>
<protein>
    <recommendedName>
        <fullName evidence="1">Cytochrome c-type biogenesis protein CcmE</fullName>
    </recommendedName>
    <alternativeName>
        <fullName evidence="1">Cytochrome c maturation protein E</fullName>
    </alternativeName>
    <alternativeName>
        <fullName evidence="1">Heme chaperone CcmE</fullName>
    </alternativeName>
</protein>
<evidence type="ECO:0000255" key="1">
    <source>
        <dbReference type="HAMAP-Rule" id="MF_01959"/>
    </source>
</evidence>
<evidence type="ECO:0000256" key="2">
    <source>
        <dbReference type="SAM" id="MobiDB-lite"/>
    </source>
</evidence>
<dbReference type="EMBL" id="CP001029">
    <property type="protein sequence ID" value="ACB79569.1"/>
    <property type="molecule type" value="Genomic_DNA"/>
</dbReference>
<dbReference type="RefSeq" id="WP_012453317.1">
    <property type="nucleotide sequence ID" value="NC_010725.1"/>
</dbReference>
<dbReference type="SMR" id="B1ZE84"/>
<dbReference type="STRING" id="441620.Mpop_1402"/>
<dbReference type="KEGG" id="mpo:Mpop_1402"/>
<dbReference type="eggNOG" id="COG2332">
    <property type="taxonomic scope" value="Bacteria"/>
</dbReference>
<dbReference type="HOGENOM" id="CLU_079503_1_1_5"/>
<dbReference type="OrthoDB" id="9793584at2"/>
<dbReference type="Proteomes" id="UP000007136">
    <property type="component" value="Chromosome"/>
</dbReference>
<dbReference type="GO" id="GO:0005886">
    <property type="term" value="C:plasma membrane"/>
    <property type="evidence" value="ECO:0007669"/>
    <property type="project" value="UniProtKB-SubCell"/>
</dbReference>
<dbReference type="GO" id="GO:0020037">
    <property type="term" value="F:heme binding"/>
    <property type="evidence" value="ECO:0007669"/>
    <property type="project" value="InterPro"/>
</dbReference>
<dbReference type="GO" id="GO:0046872">
    <property type="term" value="F:metal ion binding"/>
    <property type="evidence" value="ECO:0007669"/>
    <property type="project" value="UniProtKB-KW"/>
</dbReference>
<dbReference type="GO" id="GO:0017004">
    <property type="term" value="P:cytochrome complex assembly"/>
    <property type="evidence" value="ECO:0007669"/>
    <property type="project" value="UniProtKB-KW"/>
</dbReference>
<dbReference type="FunFam" id="2.40.50.140:FF:000104">
    <property type="entry name" value="Cytochrome c-type biogenesis protein CcmE"/>
    <property type="match status" value="1"/>
</dbReference>
<dbReference type="Gene3D" id="2.40.50.140">
    <property type="entry name" value="Nucleic acid-binding proteins"/>
    <property type="match status" value="1"/>
</dbReference>
<dbReference type="HAMAP" id="MF_01959">
    <property type="entry name" value="CcmE"/>
    <property type="match status" value="1"/>
</dbReference>
<dbReference type="InterPro" id="IPR004329">
    <property type="entry name" value="CcmE"/>
</dbReference>
<dbReference type="InterPro" id="IPR036127">
    <property type="entry name" value="CcmE-like_sf"/>
</dbReference>
<dbReference type="InterPro" id="IPR012340">
    <property type="entry name" value="NA-bd_OB-fold"/>
</dbReference>
<dbReference type="NCBIfam" id="NF009727">
    <property type="entry name" value="PRK13254.1-1"/>
    <property type="match status" value="1"/>
</dbReference>
<dbReference type="NCBIfam" id="NF009729">
    <property type="entry name" value="PRK13254.1-3"/>
    <property type="match status" value="1"/>
</dbReference>
<dbReference type="NCBIfam" id="NF009731">
    <property type="entry name" value="PRK13254.1-5"/>
    <property type="match status" value="1"/>
</dbReference>
<dbReference type="PANTHER" id="PTHR34128">
    <property type="entry name" value="CYTOCHROME C-TYPE BIOGENESIS PROTEIN CCME HOMOLOG, MITOCHONDRIAL"/>
    <property type="match status" value="1"/>
</dbReference>
<dbReference type="PANTHER" id="PTHR34128:SF2">
    <property type="entry name" value="CYTOCHROME C-TYPE BIOGENESIS PROTEIN CCME HOMOLOG, MITOCHONDRIAL"/>
    <property type="match status" value="1"/>
</dbReference>
<dbReference type="Pfam" id="PF03100">
    <property type="entry name" value="CcmE"/>
    <property type="match status" value="1"/>
</dbReference>
<dbReference type="SUPFAM" id="SSF82093">
    <property type="entry name" value="Heme chaperone CcmE"/>
    <property type="match status" value="1"/>
</dbReference>